<reference key="1">
    <citation type="journal article" date="2001" name="Nature">
        <title>Complete genome sequence of Salmonella enterica serovar Typhimurium LT2.</title>
        <authorList>
            <person name="McClelland M."/>
            <person name="Sanderson K.E."/>
            <person name="Spieth J."/>
            <person name="Clifton S.W."/>
            <person name="Latreille P."/>
            <person name="Courtney L."/>
            <person name="Porwollik S."/>
            <person name="Ali J."/>
            <person name="Dante M."/>
            <person name="Du F."/>
            <person name="Hou S."/>
            <person name="Layman D."/>
            <person name="Leonard S."/>
            <person name="Nguyen C."/>
            <person name="Scott K."/>
            <person name="Holmes A."/>
            <person name="Grewal N."/>
            <person name="Mulvaney E."/>
            <person name="Ryan E."/>
            <person name="Sun H."/>
            <person name="Florea L."/>
            <person name="Miller W."/>
            <person name="Stoneking T."/>
            <person name="Nhan M."/>
            <person name="Waterston R."/>
            <person name="Wilson R.K."/>
        </authorList>
    </citation>
    <scope>NUCLEOTIDE SEQUENCE [LARGE SCALE GENOMIC DNA]</scope>
    <source>
        <strain>LT2 / SGSC1412 / ATCC 700720</strain>
    </source>
</reference>
<evidence type="ECO:0000255" key="1">
    <source>
        <dbReference type="HAMAP-Rule" id="MF_00046"/>
    </source>
</evidence>
<dbReference type="EC" id="6.3.2.8" evidence="1"/>
<dbReference type="EMBL" id="AE006468">
    <property type="protein sequence ID" value="AAL19093.1"/>
    <property type="molecule type" value="Genomic_DNA"/>
</dbReference>
<dbReference type="RefSeq" id="NP_459134.1">
    <property type="nucleotide sequence ID" value="NC_003197.2"/>
</dbReference>
<dbReference type="RefSeq" id="WP_001096070.1">
    <property type="nucleotide sequence ID" value="NC_003197.2"/>
</dbReference>
<dbReference type="SMR" id="Q8ZRU2"/>
<dbReference type="STRING" id="99287.STM0129"/>
<dbReference type="PaxDb" id="99287-STM0129"/>
<dbReference type="GeneID" id="1251647"/>
<dbReference type="KEGG" id="stm:STM0129"/>
<dbReference type="PATRIC" id="fig|99287.12.peg.135"/>
<dbReference type="HOGENOM" id="CLU_028104_2_2_6"/>
<dbReference type="OMA" id="DITYQLR"/>
<dbReference type="PhylomeDB" id="Q8ZRU2"/>
<dbReference type="BioCyc" id="SENT99287:STM0129-MONOMER"/>
<dbReference type="UniPathway" id="UPA00219"/>
<dbReference type="Proteomes" id="UP000001014">
    <property type="component" value="Chromosome"/>
</dbReference>
<dbReference type="GO" id="GO:0005737">
    <property type="term" value="C:cytoplasm"/>
    <property type="evidence" value="ECO:0007669"/>
    <property type="project" value="UniProtKB-SubCell"/>
</dbReference>
<dbReference type="GO" id="GO:0005524">
    <property type="term" value="F:ATP binding"/>
    <property type="evidence" value="ECO:0007669"/>
    <property type="project" value="UniProtKB-UniRule"/>
</dbReference>
<dbReference type="GO" id="GO:0008763">
    <property type="term" value="F:UDP-N-acetylmuramate-L-alanine ligase activity"/>
    <property type="evidence" value="ECO:0007669"/>
    <property type="project" value="UniProtKB-UniRule"/>
</dbReference>
<dbReference type="GO" id="GO:0051301">
    <property type="term" value="P:cell division"/>
    <property type="evidence" value="ECO:0007669"/>
    <property type="project" value="UniProtKB-KW"/>
</dbReference>
<dbReference type="GO" id="GO:0071555">
    <property type="term" value="P:cell wall organization"/>
    <property type="evidence" value="ECO:0007669"/>
    <property type="project" value="UniProtKB-KW"/>
</dbReference>
<dbReference type="GO" id="GO:0009252">
    <property type="term" value="P:peptidoglycan biosynthetic process"/>
    <property type="evidence" value="ECO:0007669"/>
    <property type="project" value="UniProtKB-UniRule"/>
</dbReference>
<dbReference type="GO" id="GO:0008360">
    <property type="term" value="P:regulation of cell shape"/>
    <property type="evidence" value="ECO:0007669"/>
    <property type="project" value="UniProtKB-KW"/>
</dbReference>
<dbReference type="FunFam" id="3.40.1190.10:FF:000001">
    <property type="entry name" value="UDP-N-acetylmuramate--L-alanine ligase"/>
    <property type="match status" value="1"/>
</dbReference>
<dbReference type="FunFam" id="3.40.50.720:FF:000046">
    <property type="entry name" value="UDP-N-acetylmuramate--L-alanine ligase"/>
    <property type="match status" value="1"/>
</dbReference>
<dbReference type="FunFam" id="3.90.190.20:FF:000001">
    <property type="entry name" value="UDP-N-acetylmuramate--L-alanine ligase"/>
    <property type="match status" value="1"/>
</dbReference>
<dbReference type="Gene3D" id="3.90.190.20">
    <property type="entry name" value="Mur ligase, C-terminal domain"/>
    <property type="match status" value="1"/>
</dbReference>
<dbReference type="Gene3D" id="3.40.1190.10">
    <property type="entry name" value="Mur-like, catalytic domain"/>
    <property type="match status" value="1"/>
</dbReference>
<dbReference type="Gene3D" id="3.40.50.720">
    <property type="entry name" value="NAD(P)-binding Rossmann-like Domain"/>
    <property type="match status" value="1"/>
</dbReference>
<dbReference type="HAMAP" id="MF_00046">
    <property type="entry name" value="MurC"/>
    <property type="match status" value="1"/>
</dbReference>
<dbReference type="InterPro" id="IPR036565">
    <property type="entry name" value="Mur-like_cat_sf"/>
</dbReference>
<dbReference type="InterPro" id="IPR004101">
    <property type="entry name" value="Mur_ligase_C"/>
</dbReference>
<dbReference type="InterPro" id="IPR036615">
    <property type="entry name" value="Mur_ligase_C_dom_sf"/>
</dbReference>
<dbReference type="InterPro" id="IPR013221">
    <property type="entry name" value="Mur_ligase_cen"/>
</dbReference>
<dbReference type="InterPro" id="IPR000713">
    <property type="entry name" value="Mur_ligase_N"/>
</dbReference>
<dbReference type="InterPro" id="IPR050061">
    <property type="entry name" value="MurCDEF_pg_biosynth"/>
</dbReference>
<dbReference type="InterPro" id="IPR005758">
    <property type="entry name" value="UDP-N-AcMur_Ala_ligase_MurC"/>
</dbReference>
<dbReference type="NCBIfam" id="TIGR01082">
    <property type="entry name" value="murC"/>
    <property type="match status" value="1"/>
</dbReference>
<dbReference type="PANTHER" id="PTHR43445:SF3">
    <property type="entry name" value="UDP-N-ACETYLMURAMATE--L-ALANINE LIGASE"/>
    <property type="match status" value="1"/>
</dbReference>
<dbReference type="PANTHER" id="PTHR43445">
    <property type="entry name" value="UDP-N-ACETYLMURAMATE--L-ALANINE LIGASE-RELATED"/>
    <property type="match status" value="1"/>
</dbReference>
<dbReference type="Pfam" id="PF01225">
    <property type="entry name" value="Mur_ligase"/>
    <property type="match status" value="1"/>
</dbReference>
<dbReference type="Pfam" id="PF02875">
    <property type="entry name" value="Mur_ligase_C"/>
    <property type="match status" value="1"/>
</dbReference>
<dbReference type="Pfam" id="PF08245">
    <property type="entry name" value="Mur_ligase_M"/>
    <property type="match status" value="1"/>
</dbReference>
<dbReference type="SUPFAM" id="SSF51984">
    <property type="entry name" value="MurCD N-terminal domain"/>
    <property type="match status" value="1"/>
</dbReference>
<dbReference type="SUPFAM" id="SSF53623">
    <property type="entry name" value="MurD-like peptide ligases, catalytic domain"/>
    <property type="match status" value="1"/>
</dbReference>
<dbReference type="SUPFAM" id="SSF53244">
    <property type="entry name" value="MurD-like peptide ligases, peptide-binding domain"/>
    <property type="match status" value="1"/>
</dbReference>
<protein>
    <recommendedName>
        <fullName evidence="1">UDP-N-acetylmuramate--L-alanine ligase</fullName>
        <ecNumber evidence="1">6.3.2.8</ecNumber>
    </recommendedName>
    <alternativeName>
        <fullName evidence="1">UDP-N-acetylmuramoyl-L-alanine synthetase</fullName>
    </alternativeName>
</protein>
<name>MURC_SALTY</name>
<sequence length="491" mass="53438">MNTQQLAKLRSIVPEMRRVRHIHFVGIGGAGMGGIAEVLANEGYQISGSDLAPNPVTQQLTSLGATIFFNHRPENVRDASVVVVSSAISADNPEIVAAHEARIPVIRRAEMLAELMRFRHGIAIAGTHGKTTTTAMVSSIYAEAGLDPTFVNGGLVKAAGVHARLGHSRYLIAEADESDASFLHLQPMVAIVTNIEADHMDTYHGDFENLKQTFINFLHNLPFYGRAVMCVDDPVIRELLPRVGRQTTTYGFSEDADVRVEDYQQIGPQGHFTLLRQGMPDLHVTLNAPGRHNALNAAAAVAVATEEGIADDAILRALESFQGTGRRFDFLGEFPLEPVNGKAGTAMLVDDYGHHPTEVDATIKAARAGWPDKNLVMLFQPHRYTRTRDLYDDFANVLTQVDALLMLDVYPAGEAPIPGADSRSLCRTIRNRGKIDPILVSDPAQVATMLAPVLTGNDLILVQGAGNVGKIARYLSEIKLKPQIQEEEQHG</sequence>
<organism>
    <name type="scientific">Salmonella typhimurium (strain LT2 / SGSC1412 / ATCC 700720)</name>
    <dbReference type="NCBI Taxonomy" id="99287"/>
    <lineage>
        <taxon>Bacteria</taxon>
        <taxon>Pseudomonadati</taxon>
        <taxon>Pseudomonadota</taxon>
        <taxon>Gammaproteobacteria</taxon>
        <taxon>Enterobacterales</taxon>
        <taxon>Enterobacteriaceae</taxon>
        <taxon>Salmonella</taxon>
    </lineage>
</organism>
<accession>Q8ZRU2</accession>
<gene>
    <name evidence="1" type="primary">murC</name>
    <name type="ordered locus">STM0129</name>
</gene>
<feature type="chain" id="PRO_0000182148" description="UDP-N-acetylmuramate--L-alanine ligase">
    <location>
        <begin position="1"/>
        <end position="491"/>
    </location>
</feature>
<feature type="binding site" evidence="1">
    <location>
        <begin position="126"/>
        <end position="132"/>
    </location>
    <ligand>
        <name>ATP</name>
        <dbReference type="ChEBI" id="CHEBI:30616"/>
    </ligand>
</feature>
<proteinExistence type="inferred from homology"/>
<keyword id="KW-0067">ATP-binding</keyword>
<keyword id="KW-0131">Cell cycle</keyword>
<keyword id="KW-0132">Cell division</keyword>
<keyword id="KW-0133">Cell shape</keyword>
<keyword id="KW-0961">Cell wall biogenesis/degradation</keyword>
<keyword id="KW-0963">Cytoplasm</keyword>
<keyword id="KW-0436">Ligase</keyword>
<keyword id="KW-0547">Nucleotide-binding</keyword>
<keyword id="KW-0573">Peptidoglycan synthesis</keyword>
<keyword id="KW-1185">Reference proteome</keyword>
<comment type="function">
    <text evidence="1">Cell wall formation.</text>
</comment>
<comment type="catalytic activity">
    <reaction evidence="1">
        <text>UDP-N-acetyl-alpha-D-muramate + L-alanine + ATP = UDP-N-acetyl-alpha-D-muramoyl-L-alanine + ADP + phosphate + H(+)</text>
        <dbReference type="Rhea" id="RHEA:23372"/>
        <dbReference type="ChEBI" id="CHEBI:15378"/>
        <dbReference type="ChEBI" id="CHEBI:30616"/>
        <dbReference type="ChEBI" id="CHEBI:43474"/>
        <dbReference type="ChEBI" id="CHEBI:57972"/>
        <dbReference type="ChEBI" id="CHEBI:70757"/>
        <dbReference type="ChEBI" id="CHEBI:83898"/>
        <dbReference type="ChEBI" id="CHEBI:456216"/>
        <dbReference type="EC" id="6.3.2.8"/>
    </reaction>
</comment>
<comment type="pathway">
    <text evidence="1">Cell wall biogenesis; peptidoglycan biosynthesis.</text>
</comment>
<comment type="subcellular location">
    <subcellularLocation>
        <location evidence="1">Cytoplasm</location>
    </subcellularLocation>
</comment>
<comment type="similarity">
    <text evidence="1">Belongs to the MurCDEF family.</text>
</comment>